<accession>B3EEB9</accession>
<name>RL35_CHLL2</name>
<sequence>MPKMKSHRGACKRFKATASGKIKRERMNGSHNLEKKNRKRTRRLHQSTILDGTKEKQIKRMILG</sequence>
<evidence type="ECO:0000255" key="1">
    <source>
        <dbReference type="HAMAP-Rule" id="MF_00514"/>
    </source>
</evidence>
<evidence type="ECO:0000305" key="2"/>
<reference key="1">
    <citation type="submission" date="2008-05" db="EMBL/GenBank/DDBJ databases">
        <title>Complete sequence of Chlorobium limicola DSM 245.</title>
        <authorList>
            <consortium name="US DOE Joint Genome Institute"/>
            <person name="Lucas S."/>
            <person name="Copeland A."/>
            <person name="Lapidus A."/>
            <person name="Glavina del Rio T."/>
            <person name="Dalin E."/>
            <person name="Tice H."/>
            <person name="Bruce D."/>
            <person name="Goodwin L."/>
            <person name="Pitluck S."/>
            <person name="Schmutz J."/>
            <person name="Larimer F."/>
            <person name="Land M."/>
            <person name="Hauser L."/>
            <person name="Kyrpides N."/>
            <person name="Ovchinnikova G."/>
            <person name="Zhao F."/>
            <person name="Li T."/>
            <person name="Liu Z."/>
            <person name="Overmann J."/>
            <person name="Bryant D.A."/>
            <person name="Richardson P."/>
        </authorList>
    </citation>
    <scope>NUCLEOTIDE SEQUENCE [LARGE SCALE GENOMIC DNA]</scope>
    <source>
        <strain>DSM 245 / NBRC 103803 / 6330</strain>
    </source>
</reference>
<protein>
    <recommendedName>
        <fullName evidence="1">Large ribosomal subunit protein bL35</fullName>
    </recommendedName>
    <alternativeName>
        <fullName evidence="2">50S ribosomal protein L35</fullName>
    </alternativeName>
</protein>
<proteinExistence type="inferred from homology"/>
<organism>
    <name type="scientific">Chlorobium limicola (strain DSM 245 / NBRC 103803 / 6330)</name>
    <dbReference type="NCBI Taxonomy" id="290315"/>
    <lineage>
        <taxon>Bacteria</taxon>
        <taxon>Pseudomonadati</taxon>
        <taxon>Chlorobiota</taxon>
        <taxon>Chlorobiia</taxon>
        <taxon>Chlorobiales</taxon>
        <taxon>Chlorobiaceae</taxon>
        <taxon>Chlorobium/Pelodictyon group</taxon>
        <taxon>Chlorobium</taxon>
    </lineage>
</organism>
<comment type="similarity">
    <text evidence="1">Belongs to the bacterial ribosomal protein bL35 family.</text>
</comment>
<gene>
    <name evidence="1" type="primary">rpmI</name>
    <name type="ordered locus">Clim_0154</name>
</gene>
<feature type="chain" id="PRO_1000127322" description="Large ribosomal subunit protein bL35">
    <location>
        <begin position="1"/>
        <end position="64"/>
    </location>
</feature>
<keyword id="KW-0687">Ribonucleoprotein</keyword>
<keyword id="KW-0689">Ribosomal protein</keyword>
<dbReference type="EMBL" id="CP001097">
    <property type="protein sequence ID" value="ACD89253.1"/>
    <property type="molecule type" value="Genomic_DNA"/>
</dbReference>
<dbReference type="RefSeq" id="WP_012465134.1">
    <property type="nucleotide sequence ID" value="NC_010803.1"/>
</dbReference>
<dbReference type="SMR" id="B3EEB9"/>
<dbReference type="STRING" id="290315.Clim_0154"/>
<dbReference type="KEGG" id="cli:Clim_0154"/>
<dbReference type="eggNOG" id="COG0291">
    <property type="taxonomic scope" value="Bacteria"/>
</dbReference>
<dbReference type="HOGENOM" id="CLU_169643_4_3_10"/>
<dbReference type="OrthoDB" id="47476at2"/>
<dbReference type="Proteomes" id="UP000008841">
    <property type="component" value="Chromosome"/>
</dbReference>
<dbReference type="GO" id="GO:0022625">
    <property type="term" value="C:cytosolic large ribosomal subunit"/>
    <property type="evidence" value="ECO:0007669"/>
    <property type="project" value="TreeGrafter"/>
</dbReference>
<dbReference type="GO" id="GO:0003735">
    <property type="term" value="F:structural constituent of ribosome"/>
    <property type="evidence" value="ECO:0007669"/>
    <property type="project" value="InterPro"/>
</dbReference>
<dbReference type="GO" id="GO:0006412">
    <property type="term" value="P:translation"/>
    <property type="evidence" value="ECO:0007669"/>
    <property type="project" value="UniProtKB-UniRule"/>
</dbReference>
<dbReference type="FunFam" id="4.10.410.60:FF:000001">
    <property type="entry name" value="50S ribosomal protein L35"/>
    <property type="match status" value="1"/>
</dbReference>
<dbReference type="Gene3D" id="4.10.410.60">
    <property type="match status" value="1"/>
</dbReference>
<dbReference type="HAMAP" id="MF_00514">
    <property type="entry name" value="Ribosomal_bL35"/>
    <property type="match status" value="1"/>
</dbReference>
<dbReference type="InterPro" id="IPR001706">
    <property type="entry name" value="Ribosomal_bL35"/>
</dbReference>
<dbReference type="InterPro" id="IPR021137">
    <property type="entry name" value="Ribosomal_bL35-like"/>
</dbReference>
<dbReference type="InterPro" id="IPR018265">
    <property type="entry name" value="Ribosomal_bL35_CS"/>
</dbReference>
<dbReference type="InterPro" id="IPR037229">
    <property type="entry name" value="Ribosomal_bL35_sf"/>
</dbReference>
<dbReference type="NCBIfam" id="TIGR00001">
    <property type="entry name" value="rpmI_bact"/>
    <property type="match status" value="1"/>
</dbReference>
<dbReference type="PANTHER" id="PTHR33343">
    <property type="entry name" value="54S RIBOSOMAL PROTEIN BL35M"/>
    <property type="match status" value="1"/>
</dbReference>
<dbReference type="PANTHER" id="PTHR33343:SF1">
    <property type="entry name" value="LARGE RIBOSOMAL SUBUNIT PROTEIN BL35M"/>
    <property type="match status" value="1"/>
</dbReference>
<dbReference type="Pfam" id="PF01632">
    <property type="entry name" value="Ribosomal_L35p"/>
    <property type="match status" value="1"/>
</dbReference>
<dbReference type="PRINTS" id="PR00064">
    <property type="entry name" value="RIBOSOMALL35"/>
</dbReference>
<dbReference type="SUPFAM" id="SSF143034">
    <property type="entry name" value="L35p-like"/>
    <property type="match status" value="1"/>
</dbReference>
<dbReference type="PROSITE" id="PS00936">
    <property type="entry name" value="RIBOSOMAL_L35"/>
    <property type="match status" value="1"/>
</dbReference>